<accession>P53259</accession>
<accession>D6VUN3</accession>
<evidence type="ECO:0000255" key="1"/>
<evidence type="ECO:0000269" key="2">
    <source>
    </source>
</evidence>
<evidence type="ECO:0000269" key="3">
    <source>
    </source>
</evidence>
<evidence type="ECO:0000269" key="4">
    <source>
    </source>
</evidence>
<evidence type="ECO:0000269" key="5">
    <source>
    </source>
</evidence>
<evidence type="ECO:0000269" key="6">
    <source>
    </source>
</evidence>
<evidence type="ECO:0000269" key="7">
    <source>
    </source>
</evidence>
<evidence type="ECO:0000269" key="8">
    <source>
    </source>
</evidence>
<evidence type="ECO:0000269" key="9">
    <source>
    </source>
</evidence>
<evidence type="ECO:0000305" key="10"/>
<sequence>MSGVSSVMLGLRPATRIFFRSNISVSPSRTFVSYIGRSQSTSILKNAPNLEDNVTNLQKIIPKRFFSQTSILKSRWKPIFNEETTNRYVRLNRFQQYQQQRSGGNPLGSMTILGLSLMAGIYFGSPYLFEHVPPFTYFKTHPKNLVYALLGINVAVFGLWQLPKCWRFLQKYMLLQKDYVTSKISIIGSAFSHQEFWHLGMNMLALWSFGTSLATMLGASNFFSLYMNSAIAGSLFSLWYPKLARLAIVGPSLGASGALFGVLGCFSYLFPHAKILLFVFPVPGGAWVAFLASVAWNAAGCALRWGSFDYAAHLGGSMMGVLYGWYISKAVEKQRQRRLQAAGRWF</sequence>
<name>PCP1_YEAST</name>
<reference key="1">
    <citation type="journal article" date="1997" name="Nature">
        <title>The nucleotide sequence of Saccharomyces cerevisiae chromosome VII.</title>
        <authorList>
            <person name="Tettelin H."/>
            <person name="Agostoni-Carbone M.L."/>
            <person name="Albermann K."/>
            <person name="Albers M."/>
            <person name="Arroyo J."/>
            <person name="Backes U."/>
            <person name="Barreiros T."/>
            <person name="Bertani I."/>
            <person name="Bjourson A.J."/>
            <person name="Brueckner M."/>
            <person name="Bruschi C.V."/>
            <person name="Carignani G."/>
            <person name="Castagnoli L."/>
            <person name="Cerdan E."/>
            <person name="Clemente M.L."/>
            <person name="Coblenz A."/>
            <person name="Coglievina M."/>
            <person name="Coissac E."/>
            <person name="Defoor E."/>
            <person name="Del Bino S."/>
            <person name="Delius H."/>
            <person name="Delneri D."/>
            <person name="de Wergifosse P."/>
            <person name="Dujon B."/>
            <person name="Durand P."/>
            <person name="Entian K.-D."/>
            <person name="Eraso P."/>
            <person name="Escribano V."/>
            <person name="Fabiani L."/>
            <person name="Fartmann B."/>
            <person name="Feroli F."/>
            <person name="Feuermann M."/>
            <person name="Frontali L."/>
            <person name="Garcia-Gonzalez M."/>
            <person name="Garcia-Saez M.I."/>
            <person name="Goffeau A."/>
            <person name="Guerreiro P."/>
            <person name="Hani J."/>
            <person name="Hansen M."/>
            <person name="Hebling U."/>
            <person name="Hernandez K."/>
            <person name="Heumann K."/>
            <person name="Hilger F."/>
            <person name="Hofmann B."/>
            <person name="Indge K.J."/>
            <person name="James C.M."/>
            <person name="Klima R."/>
            <person name="Koetter P."/>
            <person name="Kramer B."/>
            <person name="Kramer W."/>
            <person name="Lauquin G."/>
            <person name="Leuther H."/>
            <person name="Louis E.J."/>
            <person name="Maillier E."/>
            <person name="Marconi A."/>
            <person name="Martegani E."/>
            <person name="Mazon M.J."/>
            <person name="Mazzoni C."/>
            <person name="McReynolds A.D.K."/>
            <person name="Melchioretto P."/>
            <person name="Mewes H.-W."/>
            <person name="Minenkova O."/>
            <person name="Mueller-Auer S."/>
            <person name="Nawrocki A."/>
            <person name="Netter P."/>
            <person name="Neu R."/>
            <person name="Nombela C."/>
            <person name="Oliver S.G."/>
            <person name="Panzeri L."/>
            <person name="Paoluzi S."/>
            <person name="Plevani P."/>
            <person name="Portetelle D."/>
            <person name="Portillo F."/>
            <person name="Potier S."/>
            <person name="Purnelle B."/>
            <person name="Rieger M."/>
            <person name="Riles L."/>
            <person name="Rinaldi T."/>
            <person name="Robben J."/>
            <person name="Rodrigues-Pousada C."/>
            <person name="Rodriguez-Belmonte E."/>
            <person name="Rodriguez-Torres A.M."/>
            <person name="Rose M."/>
            <person name="Ruzzi M."/>
            <person name="Saliola M."/>
            <person name="Sanchez-Perez M."/>
            <person name="Schaefer B."/>
            <person name="Schaefer M."/>
            <person name="Scharfe M."/>
            <person name="Schmidheini T."/>
            <person name="Schreer A."/>
            <person name="Skala J."/>
            <person name="Souciet J.-L."/>
            <person name="Steensma H.Y."/>
            <person name="Talla E."/>
            <person name="Thierry A."/>
            <person name="Vandenbol M."/>
            <person name="van der Aart Q.J.M."/>
            <person name="Van Dyck L."/>
            <person name="Vanoni M."/>
            <person name="Verhasselt P."/>
            <person name="Voet M."/>
            <person name="Volckaert G."/>
            <person name="Wambutt R."/>
            <person name="Watson M.D."/>
            <person name="Weber N."/>
            <person name="Wedler E."/>
            <person name="Wedler H."/>
            <person name="Wipfli P."/>
            <person name="Wolf K."/>
            <person name="Wright L.F."/>
            <person name="Zaccaria P."/>
            <person name="Zimmermann M."/>
            <person name="Zollner A."/>
            <person name="Kleine K."/>
        </authorList>
    </citation>
    <scope>NUCLEOTIDE SEQUENCE [LARGE SCALE GENOMIC DNA]</scope>
    <source>
        <strain>ATCC 204508 / S288c</strain>
    </source>
</reference>
<reference key="2">
    <citation type="journal article" date="2014" name="G3 (Bethesda)">
        <title>The reference genome sequence of Saccharomyces cerevisiae: Then and now.</title>
        <authorList>
            <person name="Engel S.R."/>
            <person name="Dietrich F.S."/>
            <person name="Fisk D.G."/>
            <person name="Binkley G."/>
            <person name="Balakrishnan R."/>
            <person name="Costanzo M.C."/>
            <person name="Dwight S.S."/>
            <person name="Hitz B.C."/>
            <person name="Karra K."/>
            <person name="Nash R.S."/>
            <person name="Weng S."/>
            <person name="Wong E.D."/>
            <person name="Lloyd P."/>
            <person name="Skrzypek M.S."/>
            <person name="Miyasato S.R."/>
            <person name="Simison M."/>
            <person name="Cherry J.M."/>
        </authorList>
    </citation>
    <scope>GENOME REANNOTATION</scope>
    <source>
        <strain>ATCC 204508 / S288c</strain>
    </source>
</reference>
<reference key="3">
    <citation type="journal article" date="2002" name="J. Mol. Biol.">
        <title>A novel two-step mechanism for removal of a mitochondrial signal sequence involves the mAAA complex and the putative rhomboid protease Pcp1.</title>
        <authorList>
            <person name="Esser K."/>
            <person name="Tursun B."/>
            <person name="Ingenhoven M."/>
            <person name="Michaelis G."/>
            <person name="Pratje E."/>
        </authorList>
    </citation>
    <scope>FUNCTION</scope>
    <scope>MUTAGENESIS OF SER-252; 254-GLY--SER-256 AND SER-256</scope>
</reference>
<reference key="4">
    <citation type="journal article" date="2002" name="Mol. Biol. Cell">
        <title>Genetic basis of mitochondrial function and morphology in Saccharomyces cerevisiae.</title>
        <authorList>
            <person name="Dimmer K.S."/>
            <person name="Fritz S."/>
            <person name="Fuchs F."/>
            <person name="Messerschmitt M."/>
            <person name="Weinbach N."/>
            <person name="Neupert W."/>
            <person name="Westermann B."/>
        </authorList>
    </citation>
    <scope>FUNCTION</scope>
</reference>
<reference key="5">
    <citation type="journal article" date="2003" name="Biochem. Biophys. Res. Commun.">
        <title>Cells lacking Pcp1p/Ugo2p, a rhomboid-like protease required for Mgm1p processing, lose mtDNA and mitochondrial structure in a Dnm1p-dependent manner, but remain competent for mitochondrial fusion.</title>
        <authorList>
            <person name="Sesaki H."/>
            <person name="Southard S.M."/>
            <person name="Hobbs A.E.A."/>
            <person name="Jensen R.E."/>
        </authorList>
    </citation>
    <scope>FUNCTION</scope>
    <scope>SUBCELLULAR LOCATION</scope>
    <scope>ACTIVE SITES</scope>
    <scope>MUTAGENESIS OF ASN-202; SER-252; SER-256 AND HIS-313</scope>
</reference>
<reference key="6">
    <citation type="journal article" date="2003" name="J. Biol. Chem.">
        <title>Processing of Mgm1 by the rhomboid-type protease Pcp1 is required for maintenance of mitochondrial morphology and of mitochondrial DNA.</title>
        <authorList>
            <person name="Herlan M."/>
            <person name="Vogel F."/>
            <person name="Bornhoevd C."/>
            <person name="Neupert W."/>
            <person name="Reichert A.S."/>
        </authorList>
    </citation>
    <scope>FUNCTION</scope>
</reference>
<reference key="7">
    <citation type="journal article" date="2003" name="Nature">
        <title>Mitochondrial membrane remodelling regulated by a conserved rhomboid protease.</title>
        <authorList>
            <person name="McQuibban G.A."/>
            <person name="Saurya S."/>
            <person name="Freeman M."/>
        </authorList>
    </citation>
    <scope>FUNCTION</scope>
    <scope>CATALYTIC ACTIVITY</scope>
    <scope>SUBCELLULAR LOCATION</scope>
    <scope>MUTAGENESIS OF SER-256</scope>
</reference>
<reference key="8">
    <citation type="journal article" date="2003" name="Nature">
        <title>Global analysis of protein localization in budding yeast.</title>
        <authorList>
            <person name="Huh W.-K."/>
            <person name="Falvo J.V."/>
            <person name="Gerke L.C."/>
            <person name="Carroll A.S."/>
            <person name="Howson R.W."/>
            <person name="Weissman J.S."/>
            <person name="O'Shea E.K."/>
        </authorList>
    </citation>
    <scope>SUBCELLULAR LOCATION [LARGE SCALE ANALYSIS]</scope>
</reference>
<reference key="9">
    <citation type="journal article" date="2004" name="Biochem. J.">
        <title>A novel role of Mgm1p, a dynamin-related GTPase, in ATP synthase assembly and cristae formation/maintenance.</title>
        <authorList>
            <person name="Amutha B."/>
            <person name="Gordon D.M."/>
            <person name="Gu Y."/>
            <person name="Pain D."/>
        </authorList>
    </citation>
    <scope>FUNCTION</scope>
</reference>
<reference key="10">
    <citation type="journal article" date="2024" name="Autophagy">
        <title>Prohibitins, Phb1 and Phb2, function as Atg8 receptors to support yeast mitophagy and also play a negative regulatory role in Atg32 processing.</title>
        <authorList>
            <person name="Garcia-Chavez D."/>
            <person name="Dominguez-Martin E."/>
            <person name="Kawasaki L."/>
            <person name="Ongay-Larios L."/>
            <person name="Ruelas-Ramirez H."/>
            <person name="Mendoza-Martinez A.E."/>
            <person name="Pardo J.P."/>
            <person name="Funes S."/>
            <person name="Coria R."/>
        </authorList>
    </citation>
    <scope>DISRUPTION PHENOTYPE</scope>
</reference>
<gene>
    <name type="primary">PCP1</name>
    <name type="synonym">MDM37</name>
    <name type="synonym">RBD1</name>
    <name type="synonym">UGO2</name>
    <name type="ordered locus">YGR101W</name>
</gene>
<feature type="transit peptide" description="Mitochondrion" evidence="1">
    <location>
        <begin position="1"/>
        <end position="73"/>
    </location>
</feature>
<feature type="chain" id="PRO_0000027392" description="Rhomboid protein 1, mitochondrial">
    <location>
        <begin position="74"/>
        <end position="346"/>
    </location>
</feature>
<feature type="transmembrane region" description="Helical" evidence="1">
    <location>
        <begin position="109"/>
        <end position="129"/>
    </location>
</feature>
<feature type="transmembrane region" description="Helical" evidence="1">
    <location>
        <begin position="145"/>
        <end position="165"/>
    </location>
</feature>
<feature type="transmembrane region" description="Helical" evidence="1">
    <location>
        <begin position="203"/>
        <end position="223"/>
    </location>
</feature>
<feature type="transmembrane region" description="Helical" evidence="1">
    <location>
        <begin position="246"/>
        <end position="266"/>
    </location>
</feature>
<feature type="transmembrane region" description="Helical" evidence="1">
    <location>
        <begin position="275"/>
        <end position="295"/>
    </location>
</feature>
<feature type="transmembrane region" description="Helical" evidence="1">
    <location>
        <begin position="308"/>
        <end position="328"/>
    </location>
</feature>
<feature type="active site" description="Nucleophile" evidence="6">
    <location>
        <position position="256"/>
    </location>
</feature>
<feature type="active site" evidence="6">
    <location>
        <position position="313"/>
    </location>
</feature>
<feature type="mutagenesis site" description="Abolishes protease activity." evidence="6">
    <original>N</original>
    <variation>A</variation>
    <location>
        <position position="202"/>
    </location>
</feature>
<feature type="mutagenesis site" description="Does not abolish protease activity." evidence="3 6">
    <original>S</original>
    <variation>A</variation>
    <variation>I</variation>
    <location>
        <position position="252"/>
    </location>
</feature>
<feature type="mutagenesis site" description="Abolishes protease activity." evidence="3">
    <original>GAS</original>
    <variation>AAI</variation>
    <location>
        <begin position="254"/>
        <end position="256"/>
    </location>
</feature>
<feature type="mutagenesis site" description="Abolishes protease activity." evidence="3 5 6">
    <original>S</original>
    <variation>A</variation>
    <variation>I</variation>
    <variation>G</variation>
    <location>
        <position position="256"/>
    </location>
</feature>
<feature type="mutagenesis site" description="Abolishes protease activity." evidence="6">
    <original>H</original>
    <variation>A</variation>
    <location>
        <position position="313"/>
    </location>
</feature>
<proteinExistence type="evidence at protein level"/>
<dbReference type="EC" id="3.4.21.105"/>
<dbReference type="EMBL" id="Z72886">
    <property type="protein sequence ID" value="CAA97104.1"/>
    <property type="molecule type" value="Genomic_DNA"/>
</dbReference>
<dbReference type="EMBL" id="BK006941">
    <property type="protein sequence ID" value="DAA08194.1"/>
    <property type="molecule type" value="Genomic_DNA"/>
</dbReference>
<dbReference type="PIR" id="S64406">
    <property type="entry name" value="S64406"/>
</dbReference>
<dbReference type="RefSeq" id="NP_011615.1">
    <property type="nucleotide sequence ID" value="NM_001181230.1"/>
</dbReference>
<dbReference type="SMR" id="P53259"/>
<dbReference type="BioGRID" id="33344">
    <property type="interactions" value="152"/>
</dbReference>
<dbReference type="DIP" id="DIP-5524N"/>
<dbReference type="FunCoup" id="P53259">
    <property type="interactions" value="715"/>
</dbReference>
<dbReference type="STRING" id="4932.YGR101W"/>
<dbReference type="MEROPS" id="S54.007"/>
<dbReference type="PaxDb" id="4932-YGR101W"/>
<dbReference type="PeptideAtlas" id="P53259"/>
<dbReference type="EnsemblFungi" id="YGR101W_mRNA">
    <property type="protein sequence ID" value="YGR101W"/>
    <property type="gene ID" value="YGR101W"/>
</dbReference>
<dbReference type="GeneID" id="852993"/>
<dbReference type="KEGG" id="sce:YGR101W"/>
<dbReference type="AGR" id="SGD:S000003333"/>
<dbReference type="SGD" id="S000003333">
    <property type="gene designation" value="PCP1"/>
</dbReference>
<dbReference type="VEuPathDB" id="FungiDB:YGR101W"/>
<dbReference type="eggNOG" id="KOG2980">
    <property type="taxonomic scope" value="Eukaryota"/>
</dbReference>
<dbReference type="GeneTree" id="ENSGT00390000013063"/>
<dbReference type="HOGENOM" id="CLU_034022_2_1_1"/>
<dbReference type="InParanoid" id="P53259"/>
<dbReference type="OMA" id="LWYPRIA"/>
<dbReference type="OrthoDB" id="10260614at2759"/>
<dbReference type="BioCyc" id="YEAST:G3O-30811-MONOMER"/>
<dbReference type="BRENDA" id="3.4.21.105">
    <property type="organism ID" value="984"/>
</dbReference>
<dbReference type="BioGRID-ORCS" id="852993">
    <property type="hits" value="10 hits in 10 CRISPR screens"/>
</dbReference>
<dbReference type="PRO" id="PR:P53259"/>
<dbReference type="Proteomes" id="UP000002311">
    <property type="component" value="Chromosome VII"/>
</dbReference>
<dbReference type="RNAct" id="P53259">
    <property type="molecule type" value="protein"/>
</dbReference>
<dbReference type="GO" id="GO:0005743">
    <property type="term" value="C:mitochondrial inner membrane"/>
    <property type="evidence" value="ECO:0000314"/>
    <property type="project" value="SGD"/>
</dbReference>
<dbReference type="GO" id="GO:0004252">
    <property type="term" value="F:serine-type endopeptidase activity"/>
    <property type="evidence" value="ECO:0000315"/>
    <property type="project" value="SGD"/>
</dbReference>
<dbReference type="GO" id="GO:0010821">
    <property type="term" value="P:regulation of mitochondrion organization"/>
    <property type="evidence" value="ECO:0000315"/>
    <property type="project" value="SGD"/>
</dbReference>
<dbReference type="GO" id="GO:0006465">
    <property type="term" value="P:signal peptide processing"/>
    <property type="evidence" value="ECO:0000315"/>
    <property type="project" value="SGD"/>
</dbReference>
<dbReference type="FunFam" id="1.20.1540.10:FF:000012">
    <property type="entry name" value="Rhomboid family protein"/>
    <property type="match status" value="1"/>
</dbReference>
<dbReference type="Gene3D" id="1.20.1540.10">
    <property type="entry name" value="Rhomboid-like"/>
    <property type="match status" value="1"/>
</dbReference>
<dbReference type="InterPro" id="IPR022764">
    <property type="entry name" value="Peptidase_S54_rhomboid_dom"/>
</dbReference>
<dbReference type="InterPro" id="IPR035952">
    <property type="entry name" value="Rhomboid-like_sf"/>
</dbReference>
<dbReference type="InterPro" id="IPR050925">
    <property type="entry name" value="Rhomboid_protease_S54"/>
</dbReference>
<dbReference type="PANTHER" id="PTHR43731:SF14">
    <property type="entry name" value="PRESENILIN-ASSOCIATED RHOMBOID-LIKE PROTEIN, MITOCHONDRIAL"/>
    <property type="match status" value="1"/>
</dbReference>
<dbReference type="PANTHER" id="PTHR43731">
    <property type="entry name" value="RHOMBOID PROTEASE"/>
    <property type="match status" value="1"/>
</dbReference>
<dbReference type="Pfam" id="PF01694">
    <property type="entry name" value="Rhomboid"/>
    <property type="match status" value="1"/>
</dbReference>
<dbReference type="SUPFAM" id="SSF144091">
    <property type="entry name" value="Rhomboid-like"/>
    <property type="match status" value="1"/>
</dbReference>
<keyword id="KW-0378">Hydrolase</keyword>
<keyword id="KW-0472">Membrane</keyword>
<keyword id="KW-0496">Mitochondrion</keyword>
<keyword id="KW-0999">Mitochondrion inner membrane</keyword>
<keyword id="KW-0645">Protease</keyword>
<keyword id="KW-1185">Reference proteome</keyword>
<keyword id="KW-0720">Serine protease</keyword>
<keyword id="KW-0809">Transit peptide</keyword>
<keyword id="KW-0812">Transmembrane</keyword>
<keyword id="KW-1133">Transmembrane helix</keyword>
<protein>
    <recommendedName>
        <fullName>Rhomboid protein 1, mitochondrial</fullName>
        <ecNumber>3.4.21.105</ecNumber>
    </recommendedName>
    <alternativeName>
        <fullName>Mitochondrial distribution and morphology protein 37</fullName>
    </alternativeName>
    <alternativeName>
        <fullName>Processing of cytochrome c peroxidase protein 1</fullName>
    </alternativeName>
</protein>
<organism>
    <name type="scientific">Saccharomyces cerevisiae (strain ATCC 204508 / S288c)</name>
    <name type="common">Baker's yeast</name>
    <dbReference type="NCBI Taxonomy" id="559292"/>
    <lineage>
        <taxon>Eukaryota</taxon>
        <taxon>Fungi</taxon>
        <taxon>Dikarya</taxon>
        <taxon>Ascomycota</taxon>
        <taxon>Saccharomycotina</taxon>
        <taxon>Saccharomycetes</taxon>
        <taxon>Saccharomycetales</taxon>
        <taxon>Saccharomycetaceae</taxon>
        <taxon>Saccharomyces</taxon>
    </lineage>
</organism>
<comment type="function">
    <text evidence="2 3 4 5 6 8">Mitochondrial rhomboid serine protease processing the mitochondrial membrane fusion regulator MGM1, and the cytochrome c peroxidase (CCP1). Required for TIM11 stability, ATP synthase complex assembly, mitochondrial morphology, cytochrome c (CYC1) storage and mitochondrial genome maintenance.</text>
</comment>
<comment type="catalytic activity">
    <reaction evidence="5">
        <text>Cleaves type-1 transmembrane domains using a catalytic dyad composed of serine and histidine that are contributed by different transmembrane domains.</text>
        <dbReference type="EC" id="3.4.21.105"/>
    </reaction>
</comment>
<comment type="subcellular location">
    <subcellularLocation>
        <location evidence="5 6 7">Mitochondrion inner membrane</location>
        <topology evidence="5 6 7">Multi-pass membrane protein</topology>
    </subcellularLocation>
</comment>
<comment type="disruption phenotype">
    <text evidence="9">Impairs mitochondrial integrity.</text>
</comment>
<comment type="similarity">
    <text evidence="10">Belongs to the peptidase S54 family.</text>
</comment>